<proteinExistence type="inferred from homology"/>
<protein>
    <recommendedName>
        <fullName>Probable glutathione transferase omega-2</fullName>
        <ecNumber>2.5.1.18</ecNumber>
    </recommendedName>
    <alternativeName>
        <fullName>Glutathione-dependent dehydroascorbate reductase</fullName>
        <ecNumber>1.8.5.1</ecNumber>
    </alternativeName>
    <alternativeName>
        <fullName>Monomethylarsonic acid reductase</fullName>
        <shortName>MMA(V) reductase</shortName>
        <ecNumber>1.20.4.2</ecNumber>
    </alternativeName>
</protein>
<organism>
    <name type="scientific">Caenorhabditis briggsae</name>
    <dbReference type="NCBI Taxonomy" id="6238"/>
    <lineage>
        <taxon>Eukaryota</taxon>
        <taxon>Metazoa</taxon>
        <taxon>Ecdysozoa</taxon>
        <taxon>Nematoda</taxon>
        <taxon>Chromadorea</taxon>
        <taxon>Rhabditida</taxon>
        <taxon>Rhabditina</taxon>
        <taxon>Rhabditomorpha</taxon>
        <taxon>Rhabditoidea</taxon>
        <taxon>Rhabditidae</taxon>
        <taxon>Peloderinae</taxon>
        <taxon>Caenorhabditis</taxon>
    </lineage>
</organism>
<name>GSTO2_CAEBR</name>
<gene>
    <name evidence="5" type="primary">gsto-2</name>
    <name type="ORF">CBG18105</name>
</gene>
<sequence length="253" mass="28451">MPVLAGINSKVLKNGDSEPSPPPAGIYRIYNMRFCPWAQRALIYASVKNVPSEVINIHLKEKPDWYFSKHYKGQVPALELDEGKKHVIESAHIPEYLDDLFPESRILPSDPYEKVQQKLLLERLAAVAPAFYAAAQAANNPEGRDEKYAALVKAFEDAEKLLTGDFFSGKAKPGFADYLIFPNYQRVFWLSHILPNSPFSSESFPGPNFPKLAKWYRTLDSIPEVAAASQPTEMGVGFFNDYLKGTPNYDYGL</sequence>
<feature type="chain" id="PRO_0000352791" description="Probable glutathione transferase omega-2">
    <location>
        <begin position="1"/>
        <end position="253"/>
    </location>
</feature>
<feature type="domain" description="GST N-terminal" evidence="4">
    <location>
        <begin position="25"/>
        <end position="105"/>
    </location>
</feature>
<feature type="domain" description="GST C-terminal" evidence="4">
    <location>
        <begin position="110"/>
        <end position="238"/>
    </location>
</feature>
<feature type="active site" description="Nucleophile" evidence="2">
    <location>
        <position position="35"/>
    </location>
</feature>
<feature type="binding site" evidence="3">
    <location>
        <position position="62"/>
    </location>
    <ligand>
        <name>glutathione</name>
        <dbReference type="ChEBI" id="CHEBI:57925"/>
    </ligand>
</feature>
<feature type="binding site" evidence="2">
    <location>
        <position position="75"/>
    </location>
    <ligand>
        <name>glutathione</name>
        <dbReference type="ChEBI" id="CHEBI:57925"/>
    </ligand>
</feature>
<feature type="binding site" evidence="3">
    <location>
        <begin position="89"/>
        <end position="90"/>
    </location>
    <ligand>
        <name>glutathione</name>
        <dbReference type="ChEBI" id="CHEBI:57925"/>
    </ligand>
</feature>
<evidence type="ECO:0000250" key="1"/>
<evidence type="ECO:0000250" key="2">
    <source>
        <dbReference type="UniProtKB" id="P78417"/>
    </source>
</evidence>
<evidence type="ECO:0000250" key="3">
    <source>
        <dbReference type="UniProtKB" id="Q9H4Y5"/>
    </source>
</evidence>
<evidence type="ECO:0000255" key="4"/>
<evidence type="ECO:0000312" key="5">
    <source>
        <dbReference type="EMBL" id="CAP35619.1"/>
    </source>
</evidence>
<keyword id="KW-0560">Oxidoreductase</keyword>
<keyword id="KW-1185">Reference proteome</keyword>
<keyword id="KW-0808">Transferase</keyword>
<dbReference type="EC" id="2.5.1.18"/>
<dbReference type="EC" id="1.8.5.1"/>
<dbReference type="EC" id="1.20.4.2"/>
<dbReference type="EMBL" id="HE600963">
    <property type="protein sequence ID" value="CAP35619.1"/>
    <property type="molecule type" value="Genomic_DNA"/>
</dbReference>
<dbReference type="SMR" id="A8XT16"/>
<dbReference type="FunCoup" id="A8XT16">
    <property type="interactions" value="1047"/>
</dbReference>
<dbReference type="STRING" id="6238.A8XT16"/>
<dbReference type="EnsemblMetazoa" id="CBG18105.1">
    <property type="protein sequence ID" value="CBG18105.1"/>
    <property type="gene ID" value="WBGene00037589"/>
</dbReference>
<dbReference type="KEGG" id="cbr:CBG_18105"/>
<dbReference type="CTD" id="8584146"/>
<dbReference type="WormBase" id="CBG18105">
    <property type="protein sequence ID" value="CBP10756"/>
    <property type="gene ID" value="WBGene00037589"/>
    <property type="gene designation" value="Cbr-gsto-2"/>
</dbReference>
<dbReference type="eggNOG" id="KOG0406">
    <property type="taxonomic scope" value="Eukaryota"/>
</dbReference>
<dbReference type="HOGENOM" id="CLU_011226_9_2_1"/>
<dbReference type="InParanoid" id="A8XT16"/>
<dbReference type="OMA" id="QENWPPR"/>
<dbReference type="Proteomes" id="UP000008549">
    <property type="component" value="Unassembled WGS sequence"/>
</dbReference>
<dbReference type="GO" id="GO:0005737">
    <property type="term" value="C:cytoplasm"/>
    <property type="evidence" value="ECO:0000318"/>
    <property type="project" value="GO_Central"/>
</dbReference>
<dbReference type="GO" id="GO:0045174">
    <property type="term" value="F:glutathione dehydrogenase (ascorbate) activity"/>
    <property type="evidence" value="ECO:0000318"/>
    <property type="project" value="GO_Central"/>
</dbReference>
<dbReference type="GO" id="GO:0004364">
    <property type="term" value="F:glutathione transferase activity"/>
    <property type="evidence" value="ECO:0000318"/>
    <property type="project" value="GO_Central"/>
</dbReference>
<dbReference type="GO" id="GO:0050610">
    <property type="term" value="F:methylarsonate reductase activity"/>
    <property type="evidence" value="ECO:0007669"/>
    <property type="project" value="UniProtKB-EC"/>
</dbReference>
<dbReference type="GO" id="GO:0006749">
    <property type="term" value="P:glutathione metabolic process"/>
    <property type="evidence" value="ECO:0000318"/>
    <property type="project" value="GO_Central"/>
</dbReference>
<dbReference type="CDD" id="cd03055">
    <property type="entry name" value="GST_N_Omega"/>
    <property type="match status" value="1"/>
</dbReference>
<dbReference type="FunFam" id="1.20.1050.10:FF:000009">
    <property type="entry name" value="Glutathione S-transferase omega-1"/>
    <property type="match status" value="1"/>
</dbReference>
<dbReference type="FunFam" id="3.40.30.10:FF:000123">
    <property type="entry name" value="Glutathione transferase o1"/>
    <property type="match status" value="1"/>
</dbReference>
<dbReference type="Gene3D" id="1.20.1050.10">
    <property type="match status" value="1"/>
</dbReference>
<dbReference type="Gene3D" id="3.40.30.10">
    <property type="entry name" value="Glutaredoxin"/>
    <property type="match status" value="1"/>
</dbReference>
<dbReference type="InterPro" id="IPR010987">
    <property type="entry name" value="Glutathione-S-Trfase_C-like"/>
</dbReference>
<dbReference type="InterPro" id="IPR036282">
    <property type="entry name" value="Glutathione-S-Trfase_C_sf"/>
</dbReference>
<dbReference type="InterPro" id="IPR040079">
    <property type="entry name" value="Glutathione_S-Trfase"/>
</dbReference>
<dbReference type="InterPro" id="IPR004045">
    <property type="entry name" value="Glutathione_S-Trfase_N"/>
</dbReference>
<dbReference type="InterPro" id="IPR005442">
    <property type="entry name" value="GST_omega"/>
</dbReference>
<dbReference type="InterPro" id="IPR050983">
    <property type="entry name" value="GST_Omega/HSP26"/>
</dbReference>
<dbReference type="InterPro" id="IPR036249">
    <property type="entry name" value="Thioredoxin-like_sf"/>
</dbReference>
<dbReference type="PANTHER" id="PTHR43968">
    <property type="match status" value="1"/>
</dbReference>
<dbReference type="PANTHER" id="PTHR43968:SF12">
    <property type="entry name" value="GLUTATHIONE S-TRANSFERASE OMEGA-RELATED"/>
    <property type="match status" value="1"/>
</dbReference>
<dbReference type="Pfam" id="PF13417">
    <property type="entry name" value="GST_N_3"/>
    <property type="match status" value="1"/>
</dbReference>
<dbReference type="PRINTS" id="PR01625">
    <property type="entry name" value="GSTRNSFRASEO"/>
</dbReference>
<dbReference type="SFLD" id="SFLDS00019">
    <property type="entry name" value="Glutathione_Transferase_(cytos"/>
    <property type="match status" value="1"/>
</dbReference>
<dbReference type="SFLD" id="SFLDG00358">
    <property type="entry name" value="Main_(cytGST)"/>
    <property type="match status" value="1"/>
</dbReference>
<dbReference type="SUPFAM" id="SSF47616">
    <property type="entry name" value="GST C-terminal domain-like"/>
    <property type="match status" value="1"/>
</dbReference>
<dbReference type="SUPFAM" id="SSF52833">
    <property type="entry name" value="Thioredoxin-like"/>
    <property type="match status" value="1"/>
</dbReference>
<dbReference type="PROSITE" id="PS50405">
    <property type="entry name" value="GST_CTER"/>
    <property type="match status" value="1"/>
</dbReference>
<dbReference type="PROSITE" id="PS50404">
    <property type="entry name" value="GST_NTER"/>
    <property type="match status" value="1"/>
</dbReference>
<accession>A8XT16</accession>
<reference evidence="5" key="1">
    <citation type="journal article" date="2003" name="PLoS Biol.">
        <title>The genome sequence of Caenorhabditis briggsae: a platform for comparative genomics.</title>
        <authorList>
            <person name="Stein L.D."/>
            <person name="Bao Z."/>
            <person name="Blasiar D."/>
            <person name="Blumenthal T."/>
            <person name="Brent M.R."/>
            <person name="Chen N."/>
            <person name="Chinwalla A."/>
            <person name="Clarke L."/>
            <person name="Clee C."/>
            <person name="Coghlan A."/>
            <person name="Coulson A."/>
            <person name="D'Eustachio P."/>
            <person name="Fitch D.H.A."/>
            <person name="Fulton L.A."/>
            <person name="Fulton R.E."/>
            <person name="Griffiths-Jones S."/>
            <person name="Harris T.W."/>
            <person name="Hillier L.W."/>
            <person name="Kamath R."/>
            <person name="Kuwabara P.E."/>
            <person name="Mardis E.R."/>
            <person name="Marra M.A."/>
            <person name="Miner T.L."/>
            <person name="Minx P."/>
            <person name="Mullikin J.C."/>
            <person name="Plumb R.W."/>
            <person name="Rogers J."/>
            <person name="Schein J.E."/>
            <person name="Sohrmann M."/>
            <person name="Spieth J."/>
            <person name="Stajich J.E."/>
            <person name="Wei C."/>
            <person name="Willey D."/>
            <person name="Wilson R.K."/>
            <person name="Durbin R.M."/>
            <person name="Waterston R.H."/>
        </authorList>
    </citation>
    <scope>NUCLEOTIDE SEQUENCE [LARGE SCALE GENOMIC DNA]</scope>
    <source>
        <strain evidence="5">AF16</strain>
    </source>
</reference>
<comment type="function">
    <text evidence="1">Exhibits glutathione-dependent thiol transferase activity. Has dehydroascorbate reductase activity and may contribute to the recycling of ascorbic acid. Participates in the biotransformation of inorganic arsenic and reduces monomethylarsonic acid (MMA) (By similarity).</text>
</comment>
<comment type="catalytic activity">
    <reaction>
        <text>RX + glutathione = an S-substituted glutathione + a halide anion + H(+)</text>
        <dbReference type="Rhea" id="RHEA:16437"/>
        <dbReference type="ChEBI" id="CHEBI:15378"/>
        <dbReference type="ChEBI" id="CHEBI:16042"/>
        <dbReference type="ChEBI" id="CHEBI:17792"/>
        <dbReference type="ChEBI" id="CHEBI:57925"/>
        <dbReference type="ChEBI" id="CHEBI:90779"/>
        <dbReference type="EC" id="2.5.1.18"/>
    </reaction>
</comment>
<comment type="catalytic activity">
    <reaction>
        <text>L-dehydroascorbate + 2 glutathione = glutathione disulfide + L-ascorbate</text>
        <dbReference type="Rhea" id="RHEA:24424"/>
        <dbReference type="ChEBI" id="CHEBI:38290"/>
        <dbReference type="ChEBI" id="CHEBI:57925"/>
        <dbReference type="ChEBI" id="CHEBI:58297"/>
        <dbReference type="ChEBI" id="CHEBI:58539"/>
        <dbReference type="EC" id="1.8.5.1"/>
    </reaction>
</comment>
<comment type="catalytic activity">
    <reaction>
        <text>methylarsonate + 2 glutathione + H(+) = methylarsonous acid + glutathione disulfide + H2O</text>
        <dbReference type="Rhea" id="RHEA:15969"/>
        <dbReference type="ChEBI" id="CHEBI:15377"/>
        <dbReference type="ChEBI" id="CHEBI:15378"/>
        <dbReference type="ChEBI" id="CHEBI:17826"/>
        <dbReference type="ChEBI" id="CHEBI:33409"/>
        <dbReference type="ChEBI" id="CHEBI:57925"/>
        <dbReference type="ChEBI" id="CHEBI:58297"/>
        <dbReference type="EC" id="1.20.4.2"/>
    </reaction>
</comment>
<comment type="similarity">
    <text evidence="4">Belongs to the GST superfamily. Omega family.</text>
</comment>